<name>RNC_ECO24</name>
<reference key="1">
    <citation type="journal article" date="2008" name="J. Bacteriol.">
        <title>The pangenome structure of Escherichia coli: comparative genomic analysis of E. coli commensal and pathogenic isolates.</title>
        <authorList>
            <person name="Rasko D.A."/>
            <person name="Rosovitz M.J."/>
            <person name="Myers G.S.A."/>
            <person name="Mongodin E.F."/>
            <person name="Fricke W.F."/>
            <person name="Gajer P."/>
            <person name="Crabtree J."/>
            <person name="Sebaihia M."/>
            <person name="Thomson N.R."/>
            <person name="Chaudhuri R."/>
            <person name="Henderson I.R."/>
            <person name="Sperandio V."/>
            <person name="Ravel J."/>
        </authorList>
    </citation>
    <scope>NUCLEOTIDE SEQUENCE [LARGE SCALE GENOMIC DNA]</scope>
    <source>
        <strain>E24377A / ETEC</strain>
    </source>
</reference>
<sequence length="226" mass="25550">MNPIVINRLQRKLGYTFNHQELLQQALTHRSASSKHNERLEFLGDSILSYVIANALYHRFPRVDEGDMSRMRATLVRGNTLAELAREFELGECLRLGPGELKSGGFRRESILADTVEALIGGVFLDSDIQTVEKLILNWYQTRLDEISPGDKQKDPKTRLQEYLQGRHLPLPTYLVVQVRGEAHDQEFTIHCQVSGLSEPVVGTGSSRRKAEQAAAEQALKKLELE</sequence>
<evidence type="ECO:0000255" key="1">
    <source>
        <dbReference type="HAMAP-Rule" id="MF_00104"/>
    </source>
</evidence>
<protein>
    <recommendedName>
        <fullName evidence="1">Ribonuclease 3</fullName>
        <ecNumber evidence="1">3.1.26.3</ecNumber>
    </recommendedName>
    <alternativeName>
        <fullName evidence="1">Ribonuclease III</fullName>
        <shortName evidence="1">RNase III</shortName>
    </alternativeName>
</protein>
<comment type="function">
    <text evidence="1">Digests double-stranded RNA. Involved in the processing of primary rRNA transcript to yield the immediate precursors to the large and small rRNAs (23S and 16S). Processes some mRNAs, and tRNAs when they are encoded in the rRNA operon. Processes pre-crRNA and tracrRNA of type II CRISPR loci if present in the organism.</text>
</comment>
<comment type="catalytic activity">
    <reaction evidence="1">
        <text>Endonucleolytic cleavage to 5'-phosphomonoester.</text>
        <dbReference type="EC" id="3.1.26.3"/>
    </reaction>
</comment>
<comment type="cofactor">
    <cofactor evidence="1">
        <name>Mg(2+)</name>
        <dbReference type="ChEBI" id="CHEBI:18420"/>
    </cofactor>
</comment>
<comment type="subunit">
    <text evidence="1">Homodimer.</text>
</comment>
<comment type="subcellular location">
    <subcellularLocation>
        <location evidence="1">Cytoplasm</location>
    </subcellularLocation>
</comment>
<comment type="similarity">
    <text evidence="1">Belongs to the ribonuclease III family.</text>
</comment>
<accession>A7ZQ11</accession>
<organism>
    <name type="scientific">Escherichia coli O139:H28 (strain E24377A / ETEC)</name>
    <dbReference type="NCBI Taxonomy" id="331111"/>
    <lineage>
        <taxon>Bacteria</taxon>
        <taxon>Pseudomonadati</taxon>
        <taxon>Pseudomonadota</taxon>
        <taxon>Gammaproteobacteria</taxon>
        <taxon>Enterobacterales</taxon>
        <taxon>Enterobacteriaceae</taxon>
        <taxon>Escherichia</taxon>
    </lineage>
</organism>
<gene>
    <name evidence="1" type="primary">rnc</name>
    <name type="ordered locus">EcE24377A_2853</name>
</gene>
<keyword id="KW-0963">Cytoplasm</keyword>
<keyword id="KW-0255">Endonuclease</keyword>
<keyword id="KW-0378">Hydrolase</keyword>
<keyword id="KW-0460">Magnesium</keyword>
<keyword id="KW-0479">Metal-binding</keyword>
<keyword id="KW-0507">mRNA processing</keyword>
<keyword id="KW-0540">Nuclease</keyword>
<keyword id="KW-1185">Reference proteome</keyword>
<keyword id="KW-0694">RNA-binding</keyword>
<keyword id="KW-0698">rRNA processing</keyword>
<keyword id="KW-0699">rRNA-binding</keyword>
<keyword id="KW-0819">tRNA processing</keyword>
<feature type="chain" id="PRO_1000075745" description="Ribonuclease 3">
    <location>
        <begin position="1"/>
        <end position="226"/>
    </location>
</feature>
<feature type="domain" description="RNase III" evidence="1">
    <location>
        <begin position="6"/>
        <end position="128"/>
    </location>
</feature>
<feature type="domain" description="DRBM" evidence="1">
    <location>
        <begin position="155"/>
        <end position="225"/>
    </location>
</feature>
<feature type="active site" evidence="1">
    <location>
        <position position="45"/>
    </location>
</feature>
<feature type="active site" evidence="1">
    <location>
        <position position="117"/>
    </location>
</feature>
<feature type="binding site" evidence="1">
    <location>
        <position position="41"/>
    </location>
    <ligand>
        <name>Mg(2+)</name>
        <dbReference type="ChEBI" id="CHEBI:18420"/>
    </ligand>
</feature>
<feature type="binding site" evidence="1">
    <location>
        <position position="114"/>
    </location>
    <ligand>
        <name>Mg(2+)</name>
        <dbReference type="ChEBI" id="CHEBI:18420"/>
    </ligand>
</feature>
<feature type="binding site" evidence="1">
    <location>
        <position position="117"/>
    </location>
    <ligand>
        <name>Mg(2+)</name>
        <dbReference type="ChEBI" id="CHEBI:18420"/>
    </ligand>
</feature>
<dbReference type="EC" id="3.1.26.3" evidence="1"/>
<dbReference type="EMBL" id="CP000800">
    <property type="protein sequence ID" value="ABV19127.1"/>
    <property type="molecule type" value="Genomic_DNA"/>
</dbReference>
<dbReference type="RefSeq" id="WP_001068343.1">
    <property type="nucleotide sequence ID" value="NC_009801.1"/>
</dbReference>
<dbReference type="SMR" id="A7ZQ11"/>
<dbReference type="GeneID" id="93774524"/>
<dbReference type="KEGG" id="ecw:EcE24377A_2853"/>
<dbReference type="HOGENOM" id="CLU_000907_1_1_6"/>
<dbReference type="Proteomes" id="UP000001122">
    <property type="component" value="Chromosome"/>
</dbReference>
<dbReference type="GO" id="GO:0005737">
    <property type="term" value="C:cytoplasm"/>
    <property type="evidence" value="ECO:0007669"/>
    <property type="project" value="UniProtKB-SubCell"/>
</dbReference>
<dbReference type="GO" id="GO:0003725">
    <property type="term" value="F:double-stranded RNA binding"/>
    <property type="evidence" value="ECO:0007669"/>
    <property type="project" value="TreeGrafter"/>
</dbReference>
<dbReference type="GO" id="GO:0046872">
    <property type="term" value="F:metal ion binding"/>
    <property type="evidence" value="ECO:0007669"/>
    <property type="project" value="UniProtKB-KW"/>
</dbReference>
<dbReference type="GO" id="GO:0004525">
    <property type="term" value="F:ribonuclease III activity"/>
    <property type="evidence" value="ECO:0007669"/>
    <property type="project" value="UniProtKB-UniRule"/>
</dbReference>
<dbReference type="GO" id="GO:0019843">
    <property type="term" value="F:rRNA binding"/>
    <property type="evidence" value="ECO:0007669"/>
    <property type="project" value="UniProtKB-KW"/>
</dbReference>
<dbReference type="GO" id="GO:0006397">
    <property type="term" value="P:mRNA processing"/>
    <property type="evidence" value="ECO:0007669"/>
    <property type="project" value="UniProtKB-UniRule"/>
</dbReference>
<dbReference type="GO" id="GO:0010468">
    <property type="term" value="P:regulation of gene expression"/>
    <property type="evidence" value="ECO:0007669"/>
    <property type="project" value="TreeGrafter"/>
</dbReference>
<dbReference type="GO" id="GO:0006364">
    <property type="term" value="P:rRNA processing"/>
    <property type="evidence" value="ECO:0007669"/>
    <property type="project" value="UniProtKB-UniRule"/>
</dbReference>
<dbReference type="GO" id="GO:0008033">
    <property type="term" value="P:tRNA processing"/>
    <property type="evidence" value="ECO:0007669"/>
    <property type="project" value="UniProtKB-KW"/>
</dbReference>
<dbReference type="CDD" id="cd10845">
    <property type="entry name" value="DSRM_RNAse_III_family"/>
    <property type="match status" value="1"/>
</dbReference>
<dbReference type="CDD" id="cd00593">
    <property type="entry name" value="RIBOc"/>
    <property type="match status" value="1"/>
</dbReference>
<dbReference type="FunFam" id="1.10.1520.10:FF:000001">
    <property type="entry name" value="Ribonuclease 3"/>
    <property type="match status" value="1"/>
</dbReference>
<dbReference type="FunFam" id="3.30.160.20:FF:000003">
    <property type="entry name" value="Ribonuclease 3"/>
    <property type="match status" value="1"/>
</dbReference>
<dbReference type="Gene3D" id="3.30.160.20">
    <property type="match status" value="1"/>
</dbReference>
<dbReference type="Gene3D" id="1.10.1520.10">
    <property type="entry name" value="Ribonuclease III domain"/>
    <property type="match status" value="1"/>
</dbReference>
<dbReference type="HAMAP" id="MF_00104">
    <property type="entry name" value="RNase_III"/>
    <property type="match status" value="1"/>
</dbReference>
<dbReference type="InterPro" id="IPR014720">
    <property type="entry name" value="dsRBD_dom"/>
</dbReference>
<dbReference type="InterPro" id="IPR011907">
    <property type="entry name" value="RNase_III"/>
</dbReference>
<dbReference type="InterPro" id="IPR000999">
    <property type="entry name" value="RNase_III_dom"/>
</dbReference>
<dbReference type="InterPro" id="IPR036389">
    <property type="entry name" value="RNase_III_sf"/>
</dbReference>
<dbReference type="NCBIfam" id="TIGR02191">
    <property type="entry name" value="RNaseIII"/>
    <property type="match status" value="1"/>
</dbReference>
<dbReference type="PANTHER" id="PTHR11207:SF0">
    <property type="entry name" value="RIBONUCLEASE 3"/>
    <property type="match status" value="1"/>
</dbReference>
<dbReference type="PANTHER" id="PTHR11207">
    <property type="entry name" value="RIBONUCLEASE III"/>
    <property type="match status" value="1"/>
</dbReference>
<dbReference type="Pfam" id="PF00035">
    <property type="entry name" value="dsrm"/>
    <property type="match status" value="1"/>
</dbReference>
<dbReference type="Pfam" id="PF14622">
    <property type="entry name" value="Ribonucleas_3_3"/>
    <property type="match status" value="1"/>
</dbReference>
<dbReference type="SMART" id="SM00358">
    <property type="entry name" value="DSRM"/>
    <property type="match status" value="1"/>
</dbReference>
<dbReference type="SMART" id="SM00535">
    <property type="entry name" value="RIBOc"/>
    <property type="match status" value="1"/>
</dbReference>
<dbReference type="SUPFAM" id="SSF54768">
    <property type="entry name" value="dsRNA-binding domain-like"/>
    <property type="match status" value="1"/>
</dbReference>
<dbReference type="SUPFAM" id="SSF69065">
    <property type="entry name" value="RNase III domain-like"/>
    <property type="match status" value="1"/>
</dbReference>
<dbReference type="PROSITE" id="PS50137">
    <property type="entry name" value="DS_RBD"/>
    <property type="match status" value="1"/>
</dbReference>
<dbReference type="PROSITE" id="PS00517">
    <property type="entry name" value="RNASE_3_1"/>
    <property type="match status" value="1"/>
</dbReference>
<dbReference type="PROSITE" id="PS50142">
    <property type="entry name" value="RNASE_3_2"/>
    <property type="match status" value="1"/>
</dbReference>
<proteinExistence type="inferred from homology"/>